<accession>A6LA51</accession>
<organism>
    <name type="scientific">Parabacteroides distasonis (strain ATCC 8503 / DSM 20701 / CIP 104284 / JCM 5825 / NCTC 11152)</name>
    <dbReference type="NCBI Taxonomy" id="435591"/>
    <lineage>
        <taxon>Bacteria</taxon>
        <taxon>Pseudomonadati</taxon>
        <taxon>Bacteroidota</taxon>
        <taxon>Bacteroidia</taxon>
        <taxon>Bacteroidales</taxon>
        <taxon>Tannerellaceae</taxon>
        <taxon>Parabacteroides</taxon>
    </lineage>
</organism>
<protein>
    <recommendedName>
        <fullName evidence="1">Sulfate adenylyltransferase subunit 2</fullName>
        <ecNumber evidence="1">2.7.7.4</ecNumber>
    </recommendedName>
    <alternativeName>
        <fullName evidence="1">ATP-sulfurylase small subunit</fullName>
    </alternativeName>
    <alternativeName>
        <fullName evidence="1">Sulfate adenylate transferase</fullName>
        <shortName evidence="1">SAT</shortName>
    </alternativeName>
</protein>
<sequence>MSDYKLSHLQELEAESIHIIREVAAEFENPVMLYSIGKDSSVMVRLAEKAFAPGKVPFPLMHIDSKWKFKEMIEFRDSYAKKFGWNLIVESNMEAFHAGVGPFTHGSKVHTDLMKTQALLHALDKYKFDAAFGGARRDEEKSRAKERIFSFRDKFHQWDPKNQRPELWDIYNARVHKGESIRVFPLSNWTELDIWQYIRLENIPIVPLYFAKERPCVEIDGNLIMADDDRLPEQYRDQIRMRMVRFRTLGCWPLTGAVESEADTIEKIVEEMMTTTKSERTTRVIDFDQDASMEQKKREGYF</sequence>
<dbReference type="EC" id="2.7.7.4" evidence="1"/>
<dbReference type="EMBL" id="CP000140">
    <property type="protein sequence ID" value="ABR42565.1"/>
    <property type="molecule type" value="Genomic_DNA"/>
</dbReference>
<dbReference type="RefSeq" id="WP_005857432.1">
    <property type="nucleotide sequence ID" value="NC_009615.1"/>
</dbReference>
<dbReference type="SMR" id="A6LA51"/>
<dbReference type="STRING" id="435591.BDI_0795"/>
<dbReference type="PaxDb" id="435591-BDI_0795"/>
<dbReference type="GeneID" id="93521574"/>
<dbReference type="KEGG" id="pdi:BDI_0795"/>
<dbReference type="eggNOG" id="COG0175">
    <property type="taxonomic scope" value="Bacteria"/>
</dbReference>
<dbReference type="HOGENOM" id="CLU_043026_0_0_10"/>
<dbReference type="BioCyc" id="PDIS435591:G1G5A-815-MONOMER"/>
<dbReference type="UniPathway" id="UPA00140">
    <property type="reaction ID" value="UER00204"/>
</dbReference>
<dbReference type="Proteomes" id="UP000000566">
    <property type="component" value="Chromosome"/>
</dbReference>
<dbReference type="GO" id="GO:0005524">
    <property type="term" value="F:ATP binding"/>
    <property type="evidence" value="ECO:0007669"/>
    <property type="project" value="UniProtKB-KW"/>
</dbReference>
<dbReference type="GO" id="GO:0004781">
    <property type="term" value="F:sulfate adenylyltransferase (ATP) activity"/>
    <property type="evidence" value="ECO:0007669"/>
    <property type="project" value="UniProtKB-UniRule"/>
</dbReference>
<dbReference type="GO" id="GO:0070814">
    <property type="term" value="P:hydrogen sulfide biosynthetic process"/>
    <property type="evidence" value="ECO:0007669"/>
    <property type="project" value="UniProtKB-UniRule"/>
</dbReference>
<dbReference type="GO" id="GO:0000103">
    <property type="term" value="P:sulfate assimilation"/>
    <property type="evidence" value="ECO:0007669"/>
    <property type="project" value="UniProtKB-UniRule"/>
</dbReference>
<dbReference type="CDD" id="cd23946">
    <property type="entry name" value="Sulfate_adenylyltransferase_2"/>
    <property type="match status" value="1"/>
</dbReference>
<dbReference type="FunFam" id="3.40.50.620:FF:000002">
    <property type="entry name" value="Sulfate adenylyltransferase subunit 2"/>
    <property type="match status" value="1"/>
</dbReference>
<dbReference type="Gene3D" id="3.40.50.620">
    <property type="entry name" value="HUPs"/>
    <property type="match status" value="1"/>
</dbReference>
<dbReference type="HAMAP" id="MF_00064">
    <property type="entry name" value="Sulf_adenylyltr_sub2"/>
    <property type="match status" value="1"/>
</dbReference>
<dbReference type="InterPro" id="IPR002500">
    <property type="entry name" value="PAPS_reduct_dom"/>
</dbReference>
<dbReference type="InterPro" id="IPR014729">
    <property type="entry name" value="Rossmann-like_a/b/a_fold"/>
</dbReference>
<dbReference type="InterPro" id="IPR011784">
    <property type="entry name" value="SO4_adenylTrfase_ssu"/>
</dbReference>
<dbReference type="InterPro" id="IPR050128">
    <property type="entry name" value="Sulfate_adenylyltrnsfr_sub2"/>
</dbReference>
<dbReference type="NCBIfam" id="TIGR02039">
    <property type="entry name" value="CysD"/>
    <property type="match status" value="1"/>
</dbReference>
<dbReference type="NCBIfam" id="NF003587">
    <property type="entry name" value="PRK05253.1"/>
    <property type="match status" value="1"/>
</dbReference>
<dbReference type="NCBIfam" id="NF009214">
    <property type="entry name" value="PRK12563.1"/>
    <property type="match status" value="1"/>
</dbReference>
<dbReference type="PANTHER" id="PTHR43196">
    <property type="entry name" value="SULFATE ADENYLYLTRANSFERASE SUBUNIT 2"/>
    <property type="match status" value="1"/>
</dbReference>
<dbReference type="PANTHER" id="PTHR43196:SF1">
    <property type="entry name" value="SULFATE ADENYLYLTRANSFERASE SUBUNIT 2"/>
    <property type="match status" value="1"/>
</dbReference>
<dbReference type="Pfam" id="PF01507">
    <property type="entry name" value="PAPS_reduct"/>
    <property type="match status" value="1"/>
</dbReference>
<dbReference type="PIRSF" id="PIRSF002936">
    <property type="entry name" value="CysDAde_trans"/>
    <property type="match status" value="1"/>
</dbReference>
<dbReference type="SUPFAM" id="SSF52402">
    <property type="entry name" value="Adenine nucleotide alpha hydrolases-like"/>
    <property type="match status" value="1"/>
</dbReference>
<comment type="function">
    <text evidence="1">With CysN forms the ATP sulfurylase (ATPS) that catalyzes the adenylation of sulfate producing adenosine 5'-phosphosulfate (APS) and diphosphate, the first enzymatic step in sulfur assimilation pathway. APS synthesis involves the formation of a high-energy phosphoric-sulfuric acid anhydride bond driven by GTP hydrolysis by CysN coupled to ATP hydrolysis by CysD.</text>
</comment>
<comment type="catalytic activity">
    <reaction evidence="1">
        <text>sulfate + ATP + H(+) = adenosine 5'-phosphosulfate + diphosphate</text>
        <dbReference type="Rhea" id="RHEA:18133"/>
        <dbReference type="ChEBI" id="CHEBI:15378"/>
        <dbReference type="ChEBI" id="CHEBI:16189"/>
        <dbReference type="ChEBI" id="CHEBI:30616"/>
        <dbReference type="ChEBI" id="CHEBI:33019"/>
        <dbReference type="ChEBI" id="CHEBI:58243"/>
        <dbReference type="EC" id="2.7.7.4"/>
    </reaction>
</comment>
<comment type="pathway">
    <text evidence="1">Sulfur metabolism; hydrogen sulfide biosynthesis; sulfite from sulfate: step 1/3.</text>
</comment>
<comment type="subunit">
    <text evidence="1">Heterodimer composed of CysD, the smaller subunit, and CysN.</text>
</comment>
<comment type="similarity">
    <text evidence="1">Belongs to the PAPS reductase family. CysD subfamily.</text>
</comment>
<reference key="1">
    <citation type="journal article" date="2007" name="PLoS Biol.">
        <title>Evolution of symbiotic bacteria in the distal human intestine.</title>
        <authorList>
            <person name="Xu J."/>
            <person name="Mahowald M.A."/>
            <person name="Ley R.E."/>
            <person name="Lozupone C.A."/>
            <person name="Hamady M."/>
            <person name="Martens E.C."/>
            <person name="Henrissat B."/>
            <person name="Coutinho P.M."/>
            <person name="Minx P."/>
            <person name="Latreille P."/>
            <person name="Cordum H."/>
            <person name="Van Brunt A."/>
            <person name="Kim K."/>
            <person name="Fulton R.S."/>
            <person name="Fulton L.A."/>
            <person name="Clifton S.W."/>
            <person name="Wilson R.K."/>
            <person name="Knight R.D."/>
            <person name="Gordon J.I."/>
        </authorList>
    </citation>
    <scope>NUCLEOTIDE SEQUENCE [LARGE SCALE GENOMIC DNA]</scope>
    <source>
        <strain>ATCC 8503 / DSM 20701 / CIP 104284 / JCM 5825 / NCTC 11152</strain>
    </source>
</reference>
<feature type="chain" id="PRO_1000092213" description="Sulfate adenylyltransferase subunit 2">
    <location>
        <begin position="1"/>
        <end position="302"/>
    </location>
</feature>
<proteinExistence type="inferred from homology"/>
<evidence type="ECO:0000255" key="1">
    <source>
        <dbReference type="HAMAP-Rule" id="MF_00064"/>
    </source>
</evidence>
<name>CYSD_PARD8</name>
<gene>
    <name evidence="1" type="primary">cysD</name>
    <name type="ordered locus">BDI_0795</name>
</gene>
<keyword id="KW-0067">ATP-binding</keyword>
<keyword id="KW-0547">Nucleotide-binding</keyword>
<keyword id="KW-0548">Nucleotidyltransferase</keyword>
<keyword id="KW-1185">Reference proteome</keyword>
<keyword id="KW-0808">Transferase</keyword>